<dbReference type="EC" id="4.3.2.10"/>
<dbReference type="EMBL" id="AL111168">
    <property type="protein sequence ID" value="CAL35700.1"/>
    <property type="molecule type" value="Genomic_DNA"/>
</dbReference>
<dbReference type="PIR" id="A81256">
    <property type="entry name" value="A81256"/>
</dbReference>
<dbReference type="RefSeq" id="WP_002851492.1">
    <property type="nucleotide sequence ID" value="NZ_SZUC01000002.1"/>
</dbReference>
<dbReference type="RefSeq" id="YP_002344972.1">
    <property type="nucleotide sequence ID" value="NC_002163.1"/>
</dbReference>
<dbReference type="SMR" id="Q9PM72"/>
<dbReference type="IntAct" id="Q9PM72">
    <property type="interactions" value="8"/>
</dbReference>
<dbReference type="STRING" id="192222.Cj1603"/>
<dbReference type="PaxDb" id="192222-Cj1603"/>
<dbReference type="EnsemblBacteria" id="CAL35700">
    <property type="protein sequence ID" value="CAL35700"/>
    <property type="gene ID" value="Cj1603"/>
</dbReference>
<dbReference type="GeneID" id="905871"/>
<dbReference type="KEGG" id="cje:Cj1603"/>
<dbReference type="PATRIC" id="fig|192222.6.peg.1579"/>
<dbReference type="eggNOG" id="COG0107">
    <property type="taxonomic scope" value="Bacteria"/>
</dbReference>
<dbReference type="HOGENOM" id="CLU_048577_4_0_7"/>
<dbReference type="OrthoDB" id="9807749at2"/>
<dbReference type="UniPathway" id="UPA00031">
    <property type="reaction ID" value="UER00010"/>
</dbReference>
<dbReference type="Proteomes" id="UP000000799">
    <property type="component" value="Chromosome"/>
</dbReference>
<dbReference type="GO" id="GO:0005737">
    <property type="term" value="C:cytoplasm"/>
    <property type="evidence" value="ECO:0007669"/>
    <property type="project" value="UniProtKB-SubCell"/>
</dbReference>
<dbReference type="GO" id="GO:0000107">
    <property type="term" value="F:imidazoleglycerol-phosphate synthase activity"/>
    <property type="evidence" value="ECO:0007669"/>
    <property type="project" value="UniProtKB-UniRule"/>
</dbReference>
<dbReference type="GO" id="GO:0016829">
    <property type="term" value="F:lyase activity"/>
    <property type="evidence" value="ECO:0007669"/>
    <property type="project" value="UniProtKB-KW"/>
</dbReference>
<dbReference type="GO" id="GO:0000105">
    <property type="term" value="P:L-histidine biosynthetic process"/>
    <property type="evidence" value="ECO:0007669"/>
    <property type="project" value="UniProtKB-UniRule"/>
</dbReference>
<dbReference type="CDD" id="cd04731">
    <property type="entry name" value="HisF"/>
    <property type="match status" value="1"/>
</dbReference>
<dbReference type="FunFam" id="3.20.20.70:FF:000006">
    <property type="entry name" value="Imidazole glycerol phosphate synthase subunit HisF"/>
    <property type="match status" value="1"/>
</dbReference>
<dbReference type="Gene3D" id="3.20.20.70">
    <property type="entry name" value="Aldolase class I"/>
    <property type="match status" value="1"/>
</dbReference>
<dbReference type="HAMAP" id="MF_01013">
    <property type="entry name" value="HisF"/>
    <property type="match status" value="1"/>
</dbReference>
<dbReference type="InterPro" id="IPR013785">
    <property type="entry name" value="Aldolase_TIM"/>
</dbReference>
<dbReference type="InterPro" id="IPR006062">
    <property type="entry name" value="His_biosynth"/>
</dbReference>
<dbReference type="InterPro" id="IPR004651">
    <property type="entry name" value="HisF"/>
</dbReference>
<dbReference type="InterPro" id="IPR050064">
    <property type="entry name" value="IGPS_HisA/HisF"/>
</dbReference>
<dbReference type="InterPro" id="IPR011060">
    <property type="entry name" value="RibuloseP-bd_barrel"/>
</dbReference>
<dbReference type="NCBIfam" id="TIGR00735">
    <property type="entry name" value="hisF"/>
    <property type="match status" value="1"/>
</dbReference>
<dbReference type="PANTHER" id="PTHR21235:SF2">
    <property type="entry name" value="IMIDAZOLE GLYCEROL PHOSPHATE SYNTHASE HISHF"/>
    <property type="match status" value="1"/>
</dbReference>
<dbReference type="PANTHER" id="PTHR21235">
    <property type="entry name" value="IMIDAZOLE GLYCEROL PHOSPHATE SYNTHASE SUBUNIT HISF/H IGP SYNTHASE SUBUNIT HISF/H"/>
    <property type="match status" value="1"/>
</dbReference>
<dbReference type="Pfam" id="PF00977">
    <property type="entry name" value="His_biosynth"/>
    <property type="match status" value="1"/>
</dbReference>
<dbReference type="SUPFAM" id="SSF51366">
    <property type="entry name" value="Ribulose-phoshate binding barrel"/>
    <property type="match status" value="1"/>
</dbReference>
<organism>
    <name type="scientific">Campylobacter jejuni subsp. jejuni serotype O:2 (strain ATCC 700819 / NCTC 11168)</name>
    <dbReference type="NCBI Taxonomy" id="192222"/>
    <lineage>
        <taxon>Bacteria</taxon>
        <taxon>Pseudomonadati</taxon>
        <taxon>Campylobacterota</taxon>
        <taxon>Epsilonproteobacteria</taxon>
        <taxon>Campylobacterales</taxon>
        <taxon>Campylobacteraceae</taxon>
        <taxon>Campylobacter</taxon>
    </lineage>
</organism>
<reference key="1">
    <citation type="journal article" date="2000" name="Nature">
        <title>The genome sequence of the food-borne pathogen Campylobacter jejuni reveals hypervariable sequences.</title>
        <authorList>
            <person name="Parkhill J."/>
            <person name="Wren B.W."/>
            <person name="Mungall K.L."/>
            <person name="Ketley J.M."/>
            <person name="Churcher C.M."/>
            <person name="Basham D."/>
            <person name="Chillingworth T."/>
            <person name="Davies R.M."/>
            <person name="Feltwell T."/>
            <person name="Holroyd S."/>
            <person name="Jagels K."/>
            <person name="Karlyshev A.V."/>
            <person name="Moule S."/>
            <person name="Pallen M.J."/>
            <person name="Penn C.W."/>
            <person name="Quail M.A."/>
            <person name="Rajandream M.A."/>
            <person name="Rutherford K.M."/>
            <person name="van Vliet A.H.M."/>
            <person name="Whitehead S."/>
            <person name="Barrell B.G."/>
        </authorList>
    </citation>
    <scope>NUCLEOTIDE SEQUENCE [LARGE SCALE GENOMIC DNA]</scope>
    <source>
        <strain>ATCC 700819 / NCTC 11168</strain>
    </source>
</reference>
<protein>
    <recommendedName>
        <fullName>Imidazole glycerol phosphate synthase subunit hisF1</fullName>
        <ecNumber>4.3.2.10</ecNumber>
    </recommendedName>
    <alternativeName>
        <fullName>IGP synthase cyclase subunit</fullName>
    </alternativeName>
    <alternativeName>
        <fullName>IGP synthase subunit hisF1</fullName>
    </alternativeName>
    <alternativeName>
        <fullName>ImGP synthase subunit hisF1</fullName>
        <shortName>IGPS subunit hisF1</shortName>
    </alternativeName>
</protein>
<name>HIS61_CAMJE</name>
<comment type="function">
    <text evidence="1">IGPS catalyzes the conversion of PRFAR and glutamine to IGP, AICAR and glutamate. The HisF subunit catalyzes the cyclization activity that produces IGP and AICAR from PRFAR using the ammonia provided by the HisH subunit (By similarity).</text>
</comment>
<comment type="catalytic activity">
    <reaction>
        <text>5-[(5-phospho-1-deoxy-D-ribulos-1-ylimino)methylamino]-1-(5-phospho-beta-D-ribosyl)imidazole-4-carboxamide + L-glutamine = D-erythro-1-(imidazol-4-yl)glycerol 3-phosphate + 5-amino-1-(5-phospho-beta-D-ribosyl)imidazole-4-carboxamide + L-glutamate + H(+)</text>
        <dbReference type="Rhea" id="RHEA:24793"/>
        <dbReference type="ChEBI" id="CHEBI:15378"/>
        <dbReference type="ChEBI" id="CHEBI:29985"/>
        <dbReference type="ChEBI" id="CHEBI:58278"/>
        <dbReference type="ChEBI" id="CHEBI:58359"/>
        <dbReference type="ChEBI" id="CHEBI:58475"/>
        <dbReference type="ChEBI" id="CHEBI:58525"/>
        <dbReference type="EC" id="4.3.2.10"/>
    </reaction>
</comment>
<comment type="pathway">
    <text>Amino-acid biosynthesis; L-histidine biosynthesis; L-histidine from 5-phospho-alpha-D-ribose 1-diphosphate: step 5/9.</text>
</comment>
<comment type="subunit">
    <text evidence="1">Heterodimer of HisH and HisF.</text>
</comment>
<comment type="subcellular location">
    <subcellularLocation>
        <location evidence="1">Cytoplasm</location>
    </subcellularLocation>
</comment>
<comment type="similarity">
    <text evidence="3">Belongs to the HisA/HisF family.</text>
</comment>
<keyword id="KW-0028">Amino-acid biosynthesis</keyword>
<keyword id="KW-0963">Cytoplasm</keyword>
<keyword id="KW-0368">Histidine biosynthesis</keyword>
<keyword id="KW-0456">Lyase</keyword>
<keyword id="KW-1185">Reference proteome</keyword>
<evidence type="ECO:0000250" key="1"/>
<evidence type="ECO:0000255" key="2"/>
<evidence type="ECO:0000305" key="3"/>
<accession>Q9PM72</accession>
<accession>Q0P825</accession>
<sequence>MLTKRIIACLDVKDGRVVKGTQFKNHKDMGDIIELARYYSQNGIDELVFYDIAASARKERISREWVSEVAKNINISFCVAGGIKSEEDAAELLANGADKISINSPALNDPSLITRLAKSFGVQCVVVGIDSFKDENGNLKVFQYTGDEKTSKHSGKSTLEWVKKVQDLGAGEIVLNMMNQDGVKNGYDLEQLEAVYKICKVPLIASGGAGKMEHFLEAFKLGIDGALAASVFHQKLIDIKELKIYLKNQGLSIRI</sequence>
<gene>
    <name type="primary">hisF1</name>
    <name type="synonym">hisF</name>
    <name type="ordered locus">Cj1603</name>
</gene>
<feature type="chain" id="PRO_0000142138" description="Imidazole glycerol phosphate synthase subunit hisF1">
    <location>
        <begin position="1"/>
        <end position="255"/>
    </location>
</feature>
<feature type="active site" evidence="2">
    <location>
        <position position="11"/>
    </location>
</feature>
<feature type="active site" evidence="2">
    <location>
        <position position="130"/>
    </location>
</feature>
<proteinExistence type="inferred from homology"/>